<feature type="chain" id="PRO_1000212735" description="2-succinylbenzoate--CoA ligase">
    <location>
        <begin position="1"/>
        <end position="492"/>
    </location>
</feature>
<protein>
    <recommendedName>
        <fullName evidence="1">2-succinylbenzoate--CoA ligase</fullName>
        <ecNumber evidence="1">6.2.1.26</ecNumber>
    </recommendedName>
    <alternativeName>
        <fullName evidence="1">o-succinylbenzoyl-CoA synthetase</fullName>
        <shortName evidence="1">OSB-CoA synthetase</shortName>
    </alternativeName>
</protein>
<reference key="1">
    <citation type="submission" date="2009-06" db="EMBL/GenBank/DDBJ databases">
        <title>Complete sequence of chromosome of Geopacillus sp. WCH70.</title>
        <authorList>
            <consortium name="US DOE Joint Genome Institute"/>
            <person name="Lucas S."/>
            <person name="Copeland A."/>
            <person name="Lapidus A."/>
            <person name="Glavina del Rio T."/>
            <person name="Dalin E."/>
            <person name="Tice H."/>
            <person name="Bruce D."/>
            <person name="Goodwin L."/>
            <person name="Pitluck S."/>
            <person name="Chertkov O."/>
            <person name="Brettin T."/>
            <person name="Detter J.C."/>
            <person name="Han C."/>
            <person name="Larimer F."/>
            <person name="Land M."/>
            <person name="Hauser L."/>
            <person name="Kyrpides N."/>
            <person name="Mikhailova N."/>
            <person name="Brumm P."/>
            <person name="Mead D.A."/>
            <person name="Richardson P."/>
        </authorList>
    </citation>
    <scope>NUCLEOTIDE SEQUENCE [LARGE SCALE GENOMIC DNA]</scope>
    <source>
        <strain>WCH70</strain>
    </source>
</reference>
<dbReference type="EC" id="6.2.1.26" evidence="1"/>
<dbReference type="EMBL" id="CP001638">
    <property type="protein sequence ID" value="ACS25484.1"/>
    <property type="molecule type" value="Genomic_DNA"/>
</dbReference>
<dbReference type="SMR" id="C5D6U5"/>
<dbReference type="STRING" id="471223.GWCH70_2796"/>
<dbReference type="KEGG" id="gwc:GWCH70_2796"/>
<dbReference type="eggNOG" id="COG0318">
    <property type="taxonomic scope" value="Bacteria"/>
</dbReference>
<dbReference type="HOGENOM" id="CLU_000022_59_0_9"/>
<dbReference type="OrthoDB" id="9762242at2"/>
<dbReference type="UniPathway" id="UPA00079"/>
<dbReference type="UniPathway" id="UPA01057">
    <property type="reaction ID" value="UER00166"/>
</dbReference>
<dbReference type="GO" id="GO:0005524">
    <property type="term" value="F:ATP binding"/>
    <property type="evidence" value="ECO:0007669"/>
    <property type="project" value="UniProtKB-KW"/>
</dbReference>
<dbReference type="GO" id="GO:0008756">
    <property type="term" value="F:o-succinylbenzoate-CoA ligase activity"/>
    <property type="evidence" value="ECO:0007669"/>
    <property type="project" value="UniProtKB-UniRule"/>
</dbReference>
<dbReference type="GO" id="GO:0009234">
    <property type="term" value="P:menaquinone biosynthetic process"/>
    <property type="evidence" value="ECO:0007669"/>
    <property type="project" value="UniProtKB-UniRule"/>
</dbReference>
<dbReference type="CDD" id="cd05912">
    <property type="entry name" value="OSB_CoA_lg"/>
    <property type="match status" value="1"/>
</dbReference>
<dbReference type="FunFam" id="3.30.300.30:FF:000008">
    <property type="entry name" value="2,3-dihydroxybenzoate-AMP ligase"/>
    <property type="match status" value="1"/>
</dbReference>
<dbReference type="Gene3D" id="3.30.300.30">
    <property type="match status" value="1"/>
</dbReference>
<dbReference type="Gene3D" id="3.40.50.12780">
    <property type="entry name" value="N-terminal domain of ligase-like"/>
    <property type="match status" value="1"/>
</dbReference>
<dbReference type="HAMAP" id="MF_00731">
    <property type="entry name" value="MenE"/>
    <property type="match status" value="1"/>
</dbReference>
<dbReference type="InterPro" id="IPR025110">
    <property type="entry name" value="AMP-bd_C"/>
</dbReference>
<dbReference type="InterPro" id="IPR045851">
    <property type="entry name" value="AMP-bd_C_sf"/>
</dbReference>
<dbReference type="InterPro" id="IPR020845">
    <property type="entry name" value="AMP-binding_CS"/>
</dbReference>
<dbReference type="InterPro" id="IPR000873">
    <property type="entry name" value="AMP-dep_synth/lig_dom"/>
</dbReference>
<dbReference type="InterPro" id="IPR042099">
    <property type="entry name" value="ANL_N_sf"/>
</dbReference>
<dbReference type="InterPro" id="IPR010192">
    <property type="entry name" value="MenE"/>
</dbReference>
<dbReference type="NCBIfam" id="TIGR01923">
    <property type="entry name" value="menE"/>
    <property type="match status" value="1"/>
</dbReference>
<dbReference type="NCBIfam" id="NF002966">
    <property type="entry name" value="PRK03640.1"/>
    <property type="match status" value="1"/>
</dbReference>
<dbReference type="PANTHER" id="PTHR24096:SF149">
    <property type="entry name" value="AMP-BINDING DOMAIN-CONTAINING PROTEIN-RELATED"/>
    <property type="match status" value="1"/>
</dbReference>
<dbReference type="PANTHER" id="PTHR24096">
    <property type="entry name" value="LONG-CHAIN-FATTY-ACID--COA LIGASE"/>
    <property type="match status" value="1"/>
</dbReference>
<dbReference type="Pfam" id="PF00501">
    <property type="entry name" value="AMP-binding"/>
    <property type="match status" value="1"/>
</dbReference>
<dbReference type="Pfam" id="PF13193">
    <property type="entry name" value="AMP-binding_C"/>
    <property type="match status" value="1"/>
</dbReference>
<dbReference type="SUPFAM" id="SSF56801">
    <property type="entry name" value="Acetyl-CoA synthetase-like"/>
    <property type="match status" value="1"/>
</dbReference>
<dbReference type="PROSITE" id="PS00455">
    <property type="entry name" value="AMP_BINDING"/>
    <property type="match status" value="1"/>
</dbReference>
<organism>
    <name type="scientific">Geobacillus sp. (strain WCH70)</name>
    <dbReference type="NCBI Taxonomy" id="471223"/>
    <lineage>
        <taxon>Bacteria</taxon>
        <taxon>Bacillati</taxon>
        <taxon>Bacillota</taxon>
        <taxon>Bacilli</taxon>
        <taxon>Bacillales</taxon>
        <taxon>Anoxybacillaceae</taxon>
        <taxon>Geobacillus</taxon>
    </lineage>
</organism>
<comment type="function">
    <text evidence="1">Converts 2-succinylbenzoate (OSB) to 2-succinylbenzoyl-CoA (OSB-CoA).</text>
</comment>
<comment type="catalytic activity">
    <reaction evidence="1">
        <text>2-succinylbenzoate + ATP + CoA = 2-succinylbenzoyl-CoA + AMP + diphosphate</text>
        <dbReference type="Rhea" id="RHEA:17009"/>
        <dbReference type="ChEBI" id="CHEBI:18325"/>
        <dbReference type="ChEBI" id="CHEBI:30616"/>
        <dbReference type="ChEBI" id="CHEBI:33019"/>
        <dbReference type="ChEBI" id="CHEBI:57287"/>
        <dbReference type="ChEBI" id="CHEBI:57364"/>
        <dbReference type="ChEBI" id="CHEBI:456215"/>
        <dbReference type="EC" id="6.2.1.26"/>
    </reaction>
</comment>
<comment type="pathway">
    <text evidence="1">Quinol/quinone metabolism; 1,4-dihydroxy-2-naphthoate biosynthesis; 1,4-dihydroxy-2-naphthoate from chorismate: step 5/7.</text>
</comment>
<comment type="pathway">
    <text evidence="1">Quinol/quinone metabolism; menaquinone biosynthesis.</text>
</comment>
<comment type="similarity">
    <text evidence="1">Belongs to the ATP-dependent AMP-binding enzyme family. MenE subfamily.</text>
</comment>
<proteinExistence type="inferred from homology"/>
<evidence type="ECO:0000255" key="1">
    <source>
        <dbReference type="HAMAP-Rule" id="MF_00731"/>
    </source>
</evidence>
<gene>
    <name evidence="1" type="primary">menE</name>
    <name type="ordered locus">GWCH70_2796</name>
</gene>
<sequence>MQTSIPNWLMQRAFLTPERIAVYDGQGKKTFMELHESVMKRARQLANTGVRKGDIVAIFMKNSVAMIECIHALHYIGAIVLLQNTRLTSHELAWQLKDSGAVYVIADDELADRIEGNIRVITMSELSALPEENVEFQQYYHFDDIATIMYTSGTTGKPKGVLQTYENHWWSAIGSALNLGLNENDCWLAAVPFFHISGLSIMMRSVIYGMSMYVMRAFDAKKANELIIGGKVTIMSVVSAMLQKMIADLGERRYPETFRCMLLGGGPAPKPLLEVCKAKGIPVYQTYGMTETASQIATLAPEYSLTKLGSAGKPLFPSQLRIEKDGQVARPYEPGEIVVKGPNVTKGYLHRPDATAKAIRGGWFYTGDIGYIDEDGFLYVLDRRSDLIISGGENVYPAEIEAVLLSHEAVEEAGVTGIDDETWGQVPCAFVKRKRGYSVTVEQLKQFCQAHLAKYKIPKQIYFVDELPRNASQKLLRHQLKQLIPNNENGAL</sequence>
<accession>C5D6U5</accession>
<name>MENE_GEOSW</name>
<keyword id="KW-0067">ATP-binding</keyword>
<keyword id="KW-0436">Ligase</keyword>
<keyword id="KW-0474">Menaquinone biosynthesis</keyword>
<keyword id="KW-0547">Nucleotide-binding</keyword>